<comment type="function">
    <text evidence="5">Involved in intestinal colonization, displays in vitro mucinolytic activity, serum resistance, and hemagglutination. Important to penetrate the intestinal mucus layer.</text>
</comment>
<comment type="biophysicochemical properties">
    <phDependence>
        <text>Optimum pH is 7.0-9.0.</text>
    </phDependence>
    <temperatureDependence>
        <text>Optimum temperature is 37 degrees Celsius.</text>
    </temperatureDependence>
</comment>
<comment type="subcellular location">
    <molecule>Serine protease pic autotransporter</molecule>
    <subcellularLocation>
        <location evidence="1">Periplasm</location>
    </subcellularLocation>
</comment>
<comment type="subcellular location">
    <molecule>Serine protease pic</molecule>
    <subcellularLocation>
        <location>Secreted</location>
    </subcellularLocation>
    <subcellularLocation>
        <location>Cell surface</location>
    </subcellularLocation>
</comment>
<comment type="subcellular location">
    <molecule>Serine protease pic translocator</molecule>
    <subcellularLocation>
        <location evidence="1">Cell outer membrane</location>
        <topology evidence="1">Multi-pass membrane protein</topology>
    </subcellularLocation>
    <text evidence="1">The cleaved C-terminal fragment (autotransporter domain) is localized in the outer membrane.</text>
</comment>
<comment type="domain">
    <text evidence="1">The signal peptide, cleaved at the inner membrane, guides the autotransporter protein to the periplasmic space. Then, insertion of the C-terminal translocator domain in the outer membrane forms a hydrophilic pore for the translocation of the passenger domain to the bacterial cell surface, with subsequent cleavage (By similarity).</text>
</comment>
<comment type="PTM">
    <text evidence="6">Cleaved to release the mature protein from the outer membrane.</text>
</comment>
<keyword id="KW-0998">Cell outer membrane</keyword>
<keyword id="KW-0903">Direct protein sequencing</keyword>
<keyword id="KW-0378">Hydrolase</keyword>
<keyword id="KW-0472">Membrane</keyword>
<keyword id="KW-0574">Periplasm</keyword>
<keyword id="KW-0645">Protease</keyword>
<keyword id="KW-0964">Secreted</keyword>
<keyword id="KW-0720">Serine protease</keyword>
<keyword id="KW-0732">Signal</keyword>
<keyword id="KW-0812">Transmembrane</keyword>
<keyword id="KW-1134">Transmembrane beta strand</keyword>
<keyword id="KW-0843">Virulence</keyword>
<keyword id="KW-0865">Zymogen</keyword>
<accession>Q7BS42</accession>
<accession>D3GV21</accession>
<gene>
    <name type="primary">pic</name>
    <name type="synonym">she</name>
    <name type="ordered locus">EC042_4593</name>
</gene>
<protein>
    <recommendedName>
        <fullName>Serine protease pic autotransporter</fullName>
        <ecNumber>3.4.21.-</ecNumber>
    </recommendedName>
    <component>
        <recommendedName>
            <fullName>Serine protease pic</fullName>
        </recommendedName>
    </component>
    <component>
        <recommendedName>
            <fullName>Serine protease pic translocator</fullName>
        </recommendedName>
    </component>
</protein>
<dbReference type="EC" id="3.4.21.-"/>
<dbReference type="EMBL" id="AF097644">
    <property type="protein sequence ID" value="AAD23953.1"/>
    <property type="molecule type" value="Genomic_DNA"/>
</dbReference>
<dbReference type="EMBL" id="FN554766">
    <property type="protein sequence ID" value="CBG37419.1"/>
    <property type="molecule type" value="Genomic_DNA"/>
</dbReference>
<dbReference type="RefSeq" id="WP_001045649.1">
    <property type="nucleotide sequence ID" value="NC_017626.1"/>
</dbReference>
<dbReference type="SMR" id="Q7BS42"/>
<dbReference type="MEROPS" id="N04.002"/>
<dbReference type="MEROPS" id="S06.005"/>
<dbReference type="TCDB" id="1.B.12.4.5">
    <property type="family name" value="the autotransporter-1 (at-1) family"/>
</dbReference>
<dbReference type="KEGG" id="elo:EC042_4593"/>
<dbReference type="PATRIC" id="fig|216592.3.peg.4768"/>
<dbReference type="HOGENOM" id="CLU_000723_0_0_6"/>
<dbReference type="PHI-base" id="PHI:3792"/>
<dbReference type="Proteomes" id="UP000001407">
    <property type="component" value="Chromosome"/>
</dbReference>
<dbReference type="GO" id="GO:0009279">
    <property type="term" value="C:cell outer membrane"/>
    <property type="evidence" value="ECO:0007669"/>
    <property type="project" value="UniProtKB-SubCell"/>
</dbReference>
<dbReference type="GO" id="GO:0009986">
    <property type="term" value="C:cell surface"/>
    <property type="evidence" value="ECO:0007669"/>
    <property type="project" value="UniProtKB-SubCell"/>
</dbReference>
<dbReference type="GO" id="GO:0005576">
    <property type="term" value="C:extracellular region"/>
    <property type="evidence" value="ECO:0007669"/>
    <property type="project" value="UniProtKB-SubCell"/>
</dbReference>
<dbReference type="GO" id="GO:0042597">
    <property type="term" value="C:periplasmic space"/>
    <property type="evidence" value="ECO:0007669"/>
    <property type="project" value="UniProtKB-SubCell"/>
</dbReference>
<dbReference type="GO" id="GO:0004252">
    <property type="term" value="F:serine-type endopeptidase activity"/>
    <property type="evidence" value="ECO:0007669"/>
    <property type="project" value="InterPro"/>
</dbReference>
<dbReference type="GO" id="GO:0006508">
    <property type="term" value="P:proteolysis"/>
    <property type="evidence" value="ECO:0007669"/>
    <property type="project" value="UniProtKB-KW"/>
</dbReference>
<dbReference type="CDD" id="cd01343">
    <property type="entry name" value="PL1_Passenger_AT"/>
    <property type="match status" value="1"/>
</dbReference>
<dbReference type="Gene3D" id="2.160.20.20">
    <property type="match status" value="1"/>
</dbReference>
<dbReference type="Gene3D" id="2.40.10.120">
    <property type="match status" value="1"/>
</dbReference>
<dbReference type="Gene3D" id="2.40.128.130">
    <property type="entry name" value="Autotransporter beta-domain"/>
    <property type="match status" value="1"/>
</dbReference>
<dbReference type="InterPro" id="IPR005546">
    <property type="entry name" value="Autotransporte_beta"/>
</dbReference>
<dbReference type="InterPro" id="IPR036709">
    <property type="entry name" value="Autotransporte_beta_dom_sf"/>
</dbReference>
<dbReference type="InterPro" id="IPR012332">
    <property type="entry name" value="Autotransporter_pectin_lyase_C"/>
</dbReference>
<dbReference type="InterPro" id="IPR050909">
    <property type="entry name" value="Bact_Autotransporter_VF"/>
</dbReference>
<dbReference type="InterPro" id="IPR006315">
    <property type="entry name" value="OM_autotransptr_brl_dom"/>
</dbReference>
<dbReference type="InterPro" id="IPR011050">
    <property type="entry name" value="Pectin_lyase_fold/virulence"/>
</dbReference>
<dbReference type="InterPro" id="IPR000710">
    <property type="entry name" value="Peptidase_S6"/>
</dbReference>
<dbReference type="InterPro" id="IPR030396">
    <property type="entry name" value="Peptidase_S6_dom"/>
</dbReference>
<dbReference type="NCBIfam" id="TIGR01414">
    <property type="entry name" value="autotrans_barl"/>
    <property type="match status" value="1"/>
</dbReference>
<dbReference type="PANTHER" id="PTHR12338">
    <property type="entry name" value="AUTOTRANSPORTER"/>
    <property type="match status" value="1"/>
</dbReference>
<dbReference type="PANTHER" id="PTHR12338:SF8">
    <property type="entry name" value="HEME_HEMOPEXIN-BINDING PROTEIN"/>
    <property type="match status" value="1"/>
</dbReference>
<dbReference type="Pfam" id="PF03797">
    <property type="entry name" value="Autotransporter"/>
    <property type="match status" value="1"/>
</dbReference>
<dbReference type="Pfam" id="PF24078">
    <property type="entry name" value="Beta-sol_PIC_HAP1_IgA0_2nd"/>
    <property type="match status" value="1"/>
</dbReference>
<dbReference type="Pfam" id="PF02395">
    <property type="entry name" value="Peptidase_S6"/>
    <property type="match status" value="1"/>
</dbReference>
<dbReference type="PRINTS" id="PR00921">
    <property type="entry name" value="IGASERPTASE"/>
</dbReference>
<dbReference type="SMART" id="SM00869">
    <property type="entry name" value="Autotransporter"/>
    <property type="match status" value="1"/>
</dbReference>
<dbReference type="SUPFAM" id="SSF103515">
    <property type="entry name" value="Autotransporter"/>
    <property type="match status" value="1"/>
</dbReference>
<dbReference type="SUPFAM" id="SSF51126">
    <property type="entry name" value="Pectin lyase-like"/>
    <property type="match status" value="2"/>
</dbReference>
<dbReference type="PROSITE" id="PS51208">
    <property type="entry name" value="AUTOTRANSPORTER"/>
    <property type="match status" value="1"/>
</dbReference>
<dbReference type="PROSITE" id="PS51691">
    <property type="entry name" value="PEPTIDASE_S6"/>
    <property type="match status" value="1"/>
</dbReference>
<proteinExistence type="evidence at protein level"/>
<name>PIC_ECO44</name>
<evidence type="ECO:0000250" key="1"/>
<evidence type="ECO:0000255" key="2"/>
<evidence type="ECO:0000255" key="3">
    <source>
        <dbReference type="PROSITE-ProRule" id="PRU00556"/>
    </source>
</evidence>
<evidence type="ECO:0000255" key="4">
    <source>
        <dbReference type="PROSITE-ProRule" id="PRU01028"/>
    </source>
</evidence>
<evidence type="ECO:0000269" key="5">
    <source>
    </source>
</evidence>
<evidence type="ECO:0000305" key="6"/>
<sequence>MNKVYSLKYCPVTGGLIAVSELARRVIKKTCRRLTHILLAGIPAICLCYSQISQAGIVRSDIAYQIYRDFAENKGLFVPGANDIPVYDKDGKLVGRLGKAPMADFSSVSSNGVATLVSPQYIVSVKHNGGYRSVSFGNGKNTYSLVDRNNHPSIDFHAPRLNKLVTEVIPSAVTSEGTKANAYKYTERYTAFYRVGSGTQYTKDKDGNLVKVAGGYAFKTGGTTGVPLISDATIVSNPGQTYNPVNGPLPDYGAPGDSGSPLFAYDKQQKKWVIVAVLRAYAGINGATNWWNVIPTDYLNQVMQDDFDAPVDFVSGLGPLNWTYDKTSGTGTLSQGSKNWTMHGQKDNDLNAGKNLVFSGQNGAIILKDSVTQGAGYLEFKDSYTVSAESGKTWTGAGIITDKGTNVTWKVNGVAGDNLHKLGEGTLTINGTGVNPGGLKTGDGIVVLNQQADTAGNIQAFSSVNLASGRPTVVLGDARQVNPDNISWGYRGGKLDLNGNAVTFTRLQAADYGAVITNNAQQKSQLLLDLKAQDTNVSEPTIGNISPFGGTGTPGNLYSMILNSQTRFYILKSASYGNTLWGNSLNDPAQWEFVGMDKNKAVQTVKDRILAGRAKQPVIFHGQLTGNMDVAIPQVPGGRKVIFDGSVNLPEGTLSQDSGTLIFQGHPVIHASISGSAPVSLNQKDWENRQFTMKTLSLKDADFHLSRNASLNSDIKSDNSHITLGSDRAFVDKNDGTGNYVIPEEGTSVPDTVNDRSQYEGNITLNHNSALDIGSRFTGGIDAYDSAVSITSPDVLLTAPGAFAGSSLTVHDGGHLTALNGLFSDGHIQAGKNGKITLSGTPVKDTANQYAPAVYLTDGYDLTGDNAALEITRGAHASGDIHASAASTVTIGSDTPAELASAETAASAFAGSLLEGYNAAFNGAITGGRADVSMHNALWTLGGDSAIHSLTVRNSRISSEGDRTFRTLTVNKLDATGSDFVLRTDLKNADKINVTEKATGSDNSLNVSFMNNPAQGQALNIPLVTAPAGTSAEMFKAGTRVTGFSRVTPTLHVDTSGGNTKWILDGFKAEADKAAAAKADSFMNAGYKNFMTEVNNLNKRMGDLRDTNGDAGAWARIMSGAGSADGGYSDNYTHVQVGFDKKHELDGVDLFTGVTMTYTDSSADSHAFSGKTKSVGGGLYASALFESGAYIDLIGKYIHHDNDYTGNFASLGTKHYNTHSWYAGAETGYRYHLTEDTFIEPQAELVYGAVSGKTFRWKDGDMDLSMKNRDFSPLVGRTGVELGKTFSGKDWSVTARAGTSWQFDLLNNGETVLRDASGEKRIKGEKDSRMLFNVGMNAQIKDNMRFGLEFEKSAFGKYNVDNAVNANFRYMF</sequence>
<reference key="1">
    <citation type="journal article" date="1999" name="Infect. Immun.">
        <title>Characterization of pic, a secreted protease of Shigella flexneri and enteroaggregative Escherichia coli.</title>
        <authorList>
            <person name="Henderson I.R."/>
            <person name="Czeczulin J."/>
            <person name="Eslava C."/>
            <person name="Noriega F.R."/>
            <person name="Nataro J.P."/>
        </authorList>
    </citation>
    <scope>NUCLEOTIDE SEQUENCE [GENOMIC DNA]</scope>
    <scope>PROTEIN SEQUENCE OF 56-62; 75-82 AND 441-459</scope>
    <scope>MUTAGENESIS OF SER-258</scope>
    <scope>FUNCTION</scope>
    <scope>SUBCELLULAR LOCATION</scope>
</reference>
<reference key="2">
    <citation type="journal article" date="2010" name="PLoS ONE">
        <title>Complete genome sequence and comparative metabolic profiling of the prototypical enteroaggregative Escherichia coli strain 042.</title>
        <authorList>
            <person name="Chaudhuri R.R."/>
            <person name="Sebaihia M."/>
            <person name="Hobman J.L."/>
            <person name="Webber M.A."/>
            <person name="Leyton D.L."/>
            <person name="Goldberg M.D."/>
            <person name="Cunningham A.F."/>
            <person name="Scott-Tucker A."/>
            <person name="Ferguson P.R."/>
            <person name="Thomas C.M."/>
            <person name="Frankel G."/>
            <person name="Tang C.M."/>
            <person name="Dudley E.G."/>
            <person name="Roberts I.S."/>
            <person name="Rasko D.A."/>
            <person name="Pallen M.J."/>
            <person name="Parkhill J."/>
            <person name="Nataro J.P."/>
            <person name="Thomson N.R."/>
            <person name="Henderson I.R."/>
        </authorList>
    </citation>
    <scope>NUCLEOTIDE SEQUENCE [LARGE SCALE GENOMIC DNA]</scope>
    <source>
        <strain>042 / EAEC</strain>
    </source>
</reference>
<feature type="signal peptide" evidence="5">
    <location>
        <begin position="1"/>
        <end position="55"/>
    </location>
</feature>
<feature type="chain" id="PRO_0000387605" description="Serine protease pic autotransporter">
    <location>
        <begin position="56"/>
        <end position="1372"/>
    </location>
</feature>
<feature type="chain" id="PRO_0000026972" description="Serine protease pic">
    <location>
        <begin position="56"/>
        <end position="1095"/>
    </location>
</feature>
<feature type="chain" id="PRO_0000026973" description="Serine protease pic translocator" evidence="2">
    <location>
        <begin position="1096"/>
        <end position="1372"/>
    </location>
</feature>
<feature type="domain" description="Peptidase S6" evidence="4">
    <location>
        <begin position="56"/>
        <end position="301"/>
    </location>
</feature>
<feature type="domain" description="Autotransporter" evidence="3">
    <location>
        <begin position="1106"/>
        <end position="1372"/>
    </location>
</feature>
<feature type="active site" description="Charge relay system" evidence="4">
    <location>
        <position position="127"/>
    </location>
</feature>
<feature type="active site" description="Charge relay system" evidence="4">
    <location>
        <position position="155"/>
    </location>
</feature>
<feature type="active site" description="Charge relay system" evidence="4">
    <location>
        <position position="258"/>
    </location>
</feature>
<feature type="site" description="Cleavage" evidence="2">
    <location>
        <begin position="1095"/>
        <end position="1096"/>
    </location>
</feature>
<feature type="mutagenesis site" description="No mucinase activity." evidence="5">
    <original>S</original>
    <variation>I</variation>
    <location>
        <position position="258"/>
    </location>
</feature>
<feature type="sequence conflict" description="In Ref. 1; AAD23953." evidence="6" ref="1">
    <original>K</original>
    <variation>E</variation>
    <location>
        <position position="354"/>
    </location>
</feature>
<feature type="sequence conflict" description="In Ref. 1; AAD23953." evidence="6" ref="1">
    <original>T</original>
    <variation>P</variation>
    <location>
        <position position="385"/>
    </location>
</feature>
<feature type="sequence conflict" description="In Ref. 1; AAD23953." evidence="6" ref="1">
    <original>D</original>
    <variation>N</variation>
    <location>
        <position position="597"/>
    </location>
</feature>
<organism>
    <name type="scientific">Escherichia coli O44:H18 (strain 042 / EAEC)</name>
    <dbReference type="NCBI Taxonomy" id="216592"/>
    <lineage>
        <taxon>Bacteria</taxon>
        <taxon>Pseudomonadati</taxon>
        <taxon>Pseudomonadota</taxon>
        <taxon>Gammaproteobacteria</taxon>
        <taxon>Enterobacterales</taxon>
        <taxon>Enterobacteriaceae</taxon>
        <taxon>Escherichia</taxon>
    </lineage>
</organism>